<keyword id="KW-0030">Aminoacyl-tRNA synthetase</keyword>
<keyword id="KW-0067">ATP-binding</keyword>
<keyword id="KW-0963">Cytoplasm</keyword>
<keyword id="KW-0436">Ligase</keyword>
<keyword id="KW-0547">Nucleotide-binding</keyword>
<keyword id="KW-0648">Protein biosynthesis</keyword>
<accession>Q5FGW4</accession>
<comment type="function">
    <text evidence="1">Catalyzes the attachment of glutamate to tRNA(Glu) in a two-step reaction: glutamate is first activated by ATP to form Glu-AMP and then transferred to the acceptor end of tRNA(Glu).</text>
</comment>
<comment type="catalytic activity">
    <reaction evidence="1">
        <text>tRNA(Glu) + L-glutamate + ATP = L-glutamyl-tRNA(Glu) + AMP + diphosphate</text>
        <dbReference type="Rhea" id="RHEA:23540"/>
        <dbReference type="Rhea" id="RHEA-COMP:9663"/>
        <dbReference type="Rhea" id="RHEA-COMP:9680"/>
        <dbReference type="ChEBI" id="CHEBI:29985"/>
        <dbReference type="ChEBI" id="CHEBI:30616"/>
        <dbReference type="ChEBI" id="CHEBI:33019"/>
        <dbReference type="ChEBI" id="CHEBI:78442"/>
        <dbReference type="ChEBI" id="CHEBI:78520"/>
        <dbReference type="ChEBI" id="CHEBI:456215"/>
        <dbReference type="EC" id="6.1.1.17"/>
    </reaction>
</comment>
<comment type="subunit">
    <text evidence="1">Monomer.</text>
</comment>
<comment type="subcellular location">
    <subcellularLocation>
        <location evidence="1">Cytoplasm</location>
    </subcellularLocation>
</comment>
<comment type="similarity">
    <text evidence="1">Belongs to the class-I aminoacyl-tRNA synthetase family. Glutamate--tRNA ligase type 1 subfamily.</text>
</comment>
<reference key="1">
    <citation type="journal article" date="2006" name="J. Bacteriol.">
        <title>Comparative genomic analysis of three strains of Ehrlichia ruminantium reveals an active process of genome size plasticity.</title>
        <authorList>
            <person name="Frutos R."/>
            <person name="Viari A."/>
            <person name="Ferraz C."/>
            <person name="Morgat A."/>
            <person name="Eychenie S."/>
            <person name="Kandassamy Y."/>
            <person name="Chantal I."/>
            <person name="Bensaid A."/>
            <person name="Coissac E."/>
            <person name="Vachiery N."/>
            <person name="Demaille J."/>
            <person name="Martinez D."/>
        </authorList>
    </citation>
    <scope>NUCLEOTIDE SEQUENCE [LARGE SCALE GENOMIC DNA]</scope>
    <source>
        <strain>Gardel</strain>
    </source>
</reference>
<feature type="chain" id="PRO_0000119559" description="Glutamate--tRNA ligase 2">
    <location>
        <begin position="1"/>
        <end position="470"/>
    </location>
</feature>
<feature type="short sequence motif" description="'HIGH' region" evidence="1">
    <location>
        <begin position="11"/>
        <end position="21"/>
    </location>
</feature>
<feature type="short sequence motif" description="'KMSKS' region" evidence="1">
    <location>
        <begin position="238"/>
        <end position="242"/>
    </location>
</feature>
<feature type="binding site" evidence="1">
    <location>
        <position position="241"/>
    </location>
    <ligand>
        <name>ATP</name>
        <dbReference type="ChEBI" id="CHEBI:30616"/>
    </ligand>
</feature>
<proteinExistence type="inferred from homology"/>
<gene>
    <name evidence="1" type="primary">gltX2</name>
    <name type="ordered locus">ERGA_CDS_04420</name>
</gene>
<evidence type="ECO:0000255" key="1">
    <source>
        <dbReference type="HAMAP-Rule" id="MF_00022"/>
    </source>
</evidence>
<name>SYE2_EHRRG</name>
<protein>
    <recommendedName>
        <fullName evidence="1">Glutamate--tRNA ligase 2</fullName>
        <ecNumber evidence="1">6.1.1.17</ecNumber>
    </recommendedName>
    <alternativeName>
        <fullName evidence="1">Glutamyl-tRNA synthetase 2</fullName>
        <shortName evidence="1">GluRS 2</shortName>
    </alternativeName>
</protein>
<dbReference type="EC" id="6.1.1.17" evidence="1"/>
<dbReference type="EMBL" id="CR925677">
    <property type="protein sequence ID" value="CAI27894.1"/>
    <property type="molecule type" value="Genomic_DNA"/>
</dbReference>
<dbReference type="RefSeq" id="WP_011255571.1">
    <property type="nucleotide sequence ID" value="NC_006831.1"/>
</dbReference>
<dbReference type="SMR" id="Q5FGW4"/>
<dbReference type="KEGG" id="erg:ERGA_CDS_04420"/>
<dbReference type="HOGENOM" id="CLU_015768_6_0_5"/>
<dbReference type="OrthoDB" id="9807503at2"/>
<dbReference type="Proteomes" id="UP000000533">
    <property type="component" value="Chromosome"/>
</dbReference>
<dbReference type="GO" id="GO:0005829">
    <property type="term" value="C:cytosol"/>
    <property type="evidence" value="ECO:0007669"/>
    <property type="project" value="TreeGrafter"/>
</dbReference>
<dbReference type="GO" id="GO:0005524">
    <property type="term" value="F:ATP binding"/>
    <property type="evidence" value="ECO:0007669"/>
    <property type="project" value="UniProtKB-UniRule"/>
</dbReference>
<dbReference type="GO" id="GO:0004818">
    <property type="term" value="F:glutamate-tRNA ligase activity"/>
    <property type="evidence" value="ECO:0007669"/>
    <property type="project" value="UniProtKB-UniRule"/>
</dbReference>
<dbReference type="GO" id="GO:0000049">
    <property type="term" value="F:tRNA binding"/>
    <property type="evidence" value="ECO:0007669"/>
    <property type="project" value="InterPro"/>
</dbReference>
<dbReference type="GO" id="GO:0008270">
    <property type="term" value="F:zinc ion binding"/>
    <property type="evidence" value="ECO:0007669"/>
    <property type="project" value="InterPro"/>
</dbReference>
<dbReference type="GO" id="GO:0006424">
    <property type="term" value="P:glutamyl-tRNA aminoacylation"/>
    <property type="evidence" value="ECO:0007669"/>
    <property type="project" value="UniProtKB-UniRule"/>
</dbReference>
<dbReference type="CDD" id="cd00808">
    <property type="entry name" value="GluRS_core"/>
    <property type="match status" value="1"/>
</dbReference>
<dbReference type="FunFam" id="3.40.50.620:FF:000007">
    <property type="entry name" value="Glutamate--tRNA ligase"/>
    <property type="match status" value="1"/>
</dbReference>
<dbReference type="Gene3D" id="1.10.10.350">
    <property type="match status" value="1"/>
</dbReference>
<dbReference type="Gene3D" id="3.40.50.620">
    <property type="entry name" value="HUPs"/>
    <property type="match status" value="1"/>
</dbReference>
<dbReference type="HAMAP" id="MF_00022">
    <property type="entry name" value="Glu_tRNA_synth_type1"/>
    <property type="match status" value="1"/>
</dbReference>
<dbReference type="InterPro" id="IPR045462">
    <property type="entry name" value="aa-tRNA-synth_I_cd-bd"/>
</dbReference>
<dbReference type="InterPro" id="IPR020751">
    <property type="entry name" value="aa-tRNA-synth_I_codon-bd_sub2"/>
</dbReference>
<dbReference type="InterPro" id="IPR001412">
    <property type="entry name" value="aa-tRNA-synth_I_CS"/>
</dbReference>
<dbReference type="InterPro" id="IPR008925">
    <property type="entry name" value="aa_tRNA-synth_I_cd-bd_sf"/>
</dbReference>
<dbReference type="InterPro" id="IPR004527">
    <property type="entry name" value="Glu-tRNA-ligase_bac/mito"/>
</dbReference>
<dbReference type="InterPro" id="IPR000924">
    <property type="entry name" value="Glu/Gln-tRNA-synth"/>
</dbReference>
<dbReference type="InterPro" id="IPR020058">
    <property type="entry name" value="Glu/Gln-tRNA-synth_Ib_cat-dom"/>
</dbReference>
<dbReference type="InterPro" id="IPR049940">
    <property type="entry name" value="GluQ/Sye"/>
</dbReference>
<dbReference type="InterPro" id="IPR033910">
    <property type="entry name" value="GluRS_core"/>
</dbReference>
<dbReference type="InterPro" id="IPR014729">
    <property type="entry name" value="Rossmann-like_a/b/a_fold"/>
</dbReference>
<dbReference type="NCBIfam" id="TIGR00464">
    <property type="entry name" value="gltX_bact"/>
    <property type="match status" value="1"/>
</dbReference>
<dbReference type="PANTHER" id="PTHR43311">
    <property type="entry name" value="GLUTAMATE--TRNA LIGASE"/>
    <property type="match status" value="1"/>
</dbReference>
<dbReference type="PANTHER" id="PTHR43311:SF2">
    <property type="entry name" value="GLUTAMATE--TRNA LIGASE, MITOCHONDRIAL-RELATED"/>
    <property type="match status" value="1"/>
</dbReference>
<dbReference type="Pfam" id="PF19269">
    <property type="entry name" value="Anticodon_2"/>
    <property type="match status" value="1"/>
</dbReference>
<dbReference type="Pfam" id="PF00749">
    <property type="entry name" value="tRNA-synt_1c"/>
    <property type="match status" value="1"/>
</dbReference>
<dbReference type="PRINTS" id="PR00987">
    <property type="entry name" value="TRNASYNTHGLU"/>
</dbReference>
<dbReference type="SUPFAM" id="SSF48163">
    <property type="entry name" value="An anticodon-binding domain of class I aminoacyl-tRNA synthetases"/>
    <property type="match status" value="1"/>
</dbReference>
<dbReference type="SUPFAM" id="SSF52374">
    <property type="entry name" value="Nucleotidylyl transferase"/>
    <property type="match status" value="1"/>
</dbReference>
<dbReference type="PROSITE" id="PS00178">
    <property type="entry name" value="AA_TRNA_LIGASE_I"/>
    <property type="match status" value="1"/>
</dbReference>
<sequence>MLNHVVTRFAPSPTGHLHLGGARTALFNWLYAKHNNGKFLLRIEDTDSKRSSKELIDSIINSMIWLNIQHDGEIILQSSRISRHIEIANQLILNDKAYYCYCSEEEINLEKEQYTKKGLHYKHNCIWKNRKPPTGNCSKVIRLHSDTEGITEFKDKVYGTIAVNNVQLDDMVLLRSNNTPTYLLSVVVDDYDMGITHIIRGTDHLTNTARQLLIYNALGWKPPEFAHIPLIHDENGNKLSKRHHALGIHEYKNAGILPEALVNYLLRMGWSHGNDELITIDEAIRWFSIDKVGQSPAGLDSKKLEFLNNHYINTTNNATIIEMIIPIIEKTIGYKVNTEKIGYLLNGINELKKRTKNLVNLANESLFYVEDIPISFDQESLIIIKSNHDILSILYDNLSKVLNDDWNNSTLTSMIKNIVKDYNTKIHNIYHCLRASIIGRINAPSIIDIMVNFQREECLNRIKYARDMVK</sequence>
<organism>
    <name type="scientific">Ehrlichia ruminantium (strain Gardel)</name>
    <dbReference type="NCBI Taxonomy" id="302409"/>
    <lineage>
        <taxon>Bacteria</taxon>
        <taxon>Pseudomonadati</taxon>
        <taxon>Pseudomonadota</taxon>
        <taxon>Alphaproteobacteria</taxon>
        <taxon>Rickettsiales</taxon>
        <taxon>Anaplasmataceae</taxon>
        <taxon>Ehrlichia</taxon>
    </lineage>
</organism>